<feature type="chain" id="PRO_0000203924" description="Tagatose-6-phosphate kinase">
    <location>
        <begin position="1"/>
        <end position="310"/>
    </location>
</feature>
<name>LACC_STAEQ</name>
<proteinExistence type="inferred from homology"/>
<accession>Q5HM37</accession>
<comment type="catalytic activity">
    <reaction evidence="1">
        <text>D-tagatofuranose 6-phosphate + ATP = D-tagatofuranose 1,6-bisphosphate + ADP + H(+)</text>
        <dbReference type="Rhea" id="RHEA:12420"/>
        <dbReference type="ChEBI" id="CHEBI:15378"/>
        <dbReference type="ChEBI" id="CHEBI:30616"/>
        <dbReference type="ChEBI" id="CHEBI:58694"/>
        <dbReference type="ChEBI" id="CHEBI:58695"/>
        <dbReference type="ChEBI" id="CHEBI:456216"/>
        <dbReference type="EC" id="2.7.1.144"/>
    </reaction>
</comment>
<comment type="pathway">
    <text evidence="1">Carbohydrate metabolism; D-tagatose 6-phosphate degradation; D-glyceraldehyde 3-phosphate and glycerone phosphate from D-tagatose 6-phosphate: step 1/2.</text>
</comment>
<comment type="similarity">
    <text evidence="1">Belongs to the carbohydrate kinase PfkB family. LacC subfamily.</text>
</comment>
<keyword id="KW-0067">ATP-binding</keyword>
<keyword id="KW-0418">Kinase</keyword>
<keyword id="KW-0423">Lactose metabolism</keyword>
<keyword id="KW-0547">Nucleotide-binding</keyword>
<keyword id="KW-1185">Reference proteome</keyword>
<keyword id="KW-0808">Transferase</keyword>
<gene>
    <name evidence="1" type="primary">lacC</name>
    <name type="ordered locus">SERP1793</name>
</gene>
<reference key="1">
    <citation type="journal article" date="2005" name="J. Bacteriol.">
        <title>Insights on evolution of virulence and resistance from the complete genome analysis of an early methicillin-resistant Staphylococcus aureus strain and a biofilm-producing methicillin-resistant Staphylococcus epidermidis strain.</title>
        <authorList>
            <person name="Gill S.R."/>
            <person name="Fouts D.E."/>
            <person name="Archer G.L."/>
            <person name="Mongodin E.F."/>
            <person name="DeBoy R.T."/>
            <person name="Ravel J."/>
            <person name="Paulsen I.T."/>
            <person name="Kolonay J.F."/>
            <person name="Brinkac L.M."/>
            <person name="Beanan M.J."/>
            <person name="Dodson R.J."/>
            <person name="Daugherty S.C."/>
            <person name="Madupu R."/>
            <person name="Angiuoli S.V."/>
            <person name="Durkin A.S."/>
            <person name="Haft D.H."/>
            <person name="Vamathevan J.J."/>
            <person name="Khouri H."/>
            <person name="Utterback T.R."/>
            <person name="Lee C."/>
            <person name="Dimitrov G."/>
            <person name="Jiang L."/>
            <person name="Qin H."/>
            <person name="Weidman J."/>
            <person name="Tran K."/>
            <person name="Kang K.H."/>
            <person name="Hance I.R."/>
            <person name="Nelson K.E."/>
            <person name="Fraser C.M."/>
        </authorList>
    </citation>
    <scope>NUCLEOTIDE SEQUENCE [LARGE SCALE GENOMIC DNA]</scope>
    <source>
        <strain>ATCC 35984 / DSM 28319 / BCRC 17069 / CCUG 31568 / BM 3577 / RP62A</strain>
    </source>
</reference>
<sequence length="310" mass="34169">MILTLTLNPSVDISYPLDQFNLDTVNRVSQTSKTAGGKGLNVTRVLSEFGEDVIASGFLGGALGQYIEEQIETTRIKQAFFKIKGETRNCIAILHEGQQTEILEKGPTIELKESEEFKSHLLKLFKETDVAVMSGSLPKGLNTDYYADIVRLAKEQGILTILDSSGQSLEEVLISNVKPTVIKPNIDELSQLLNYKVTNDIKELKAAVSQPIFNDIEWIIVSLGSEGAFAKHNQKFYKVNIPNIKVVNPVGSGDSTVAGIASGLIHQQTDEELLKKANAFGMLNAMEQQTGHINTDKFDEIFKQIEVIEV</sequence>
<protein>
    <recommendedName>
        <fullName evidence="1">Tagatose-6-phosphate kinase</fullName>
        <ecNumber evidence="1">2.7.1.144</ecNumber>
    </recommendedName>
    <alternativeName>
        <fullName evidence="1">Phosphotagatokinase</fullName>
    </alternativeName>
</protein>
<evidence type="ECO:0000255" key="1">
    <source>
        <dbReference type="HAMAP-Rule" id="MF_01557"/>
    </source>
</evidence>
<dbReference type="EC" id="2.7.1.144" evidence="1"/>
<dbReference type="EMBL" id="CP000029">
    <property type="protein sequence ID" value="AAW55178.1"/>
    <property type="molecule type" value="Genomic_DNA"/>
</dbReference>
<dbReference type="RefSeq" id="WP_001829786.1">
    <property type="nucleotide sequence ID" value="NC_002976.3"/>
</dbReference>
<dbReference type="SMR" id="Q5HM37"/>
<dbReference type="STRING" id="176279.SERP1793"/>
<dbReference type="KEGG" id="ser:SERP1793"/>
<dbReference type="eggNOG" id="COG1105">
    <property type="taxonomic scope" value="Bacteria"/>
</dbReference>
<dbReference type="HOGENOM" id="CLU_050013_5_0_9"/>
<dbReference type="UniPathway" id="UPA00704">
    <property type="reaction ID" value="UER00715"/>
</dbReference>
<dbReference type="Proteomes" id="UP000000531">
    <property type="component" value="Chromosome"/>
</dbReference>
<dbReference type="GO" id="GO:0005829">
    <property type="term" value="C:cytosol"/>
    <property type="evidence" value="ECO:0007669"/>
    <property type="project" value="TreeGrafter"/>
</dbReference>
<dbReference type="GO" id="GO:0005524">
    <property type="term" value="F:ATP binding"/>
    <property type="evidence" value="ECO:0007669"/>
    <property type="project" value="UniProtKB-KW"/>
</dbReference>
<dbReference type="GO" id="GO:0008443">
    <property type="term" value="F:phosphofructokinase activity"/>
    <property type="evidence" value="ECO:0007669"/>
    <property type="project" value="TreeGrafter"/>
</dbReference>
<dbReference type="GO" id="GO:0009024">
    <property type="term" value="F:tagatose-6-phosphate kinase activity"/>
    <property type="evidence" value="ECO:0007669"/>
    <property type="project" value="UniProtKB-UniRule"/>
</dbReference>
<dbReference type="GO" id="GO:2001059">
    <property type="term" value="P:D-tagatose 6-phosphate catabolic process"/>
    <property type="evidence" value="ECO:0007669"/>
    <property type="project" value="UniProtKB-UniRule"/>
</dbReference>
<dbReference type="GO" id="GO:0019512">
    <property type="term" value="P:lactose catabolic process via tagatose-6-phosphate"/>
    <property type="evidence" value="ECO:0007669"/>
    <property type="project" value="InterPro"/>
</dbReference>
<dbReference type="CDD" id="cd01164">
    <property type="entry name" value="FruK_PfkB_like"/>
    <property type="match status" value="1"/>
</dbReference>
<dbReference type="FunFam" id="3.40.1190.20:FF:000001">
    <property type="entry name" value="Phosphofructokinase"/>
    <property type="match status" value="1"/>
</dbReference>
<dbReference type="Gene3D" id="3.40.1190.20">
    <property type="match status" value="1"/>
</dbReference>
<dbReference type="HAMAP" id="MF_01557">
    <property type="entry name" value="LacC"/>
    <property type="match status" value="1"/>
</dbReference>
<dbReference type="InterPro" id="IPR002173">
    <property type="entry name" value="Carboh/pur_kinase_PfkB_CS"/>
</dbReference>
<dbReference type="InterPro" id="IPR005926">
    <property type="entry name" value="LacC"/>
</dbReference>
<dbReference type="InterPro" id="IPR011611">
    <property type="entry name" value="PfkB_dom"/>
</dbReference>
<dbReference type="InterPro" id="IPR029056">
    <property type="entry name" value="Ribokinase-like"/>
</dbReference>
<dbReference type="InterPro" id="IPR017583">
    <property type="entry name" value="Tagatose/fructose_Pkinase"/>
</dbReference>
<dbReference type="NCBIfam" id="TIGR03168">
    <property type="entry name" value="1-PFK"/>
    <property type="match status" value="1"/>
</dbReference>
<dbReference type="NCBIfam" id="TIGR01231">
    <property type="entry name" value="lacC"/>
    <property type="match status" value="1"/>
</dbReference>
<dbReference type="NCBIfam" id="NF010033">
    <property type="entry name" value="PRK13508.1"/>
    <property type="match status" value="1"/>
</dbReference>
<dbReference type="PANTHER" id="PTHR46566:SF5">
    <property type="entry name" value="1-PHOSPHOFRUCTOKINASE"/>
    <property type="match status" value="1"/>
</dbReference>
<dbReference type="PANTHER" id="PTHR46566">
    <property type="entry name" value="1-PHOSPHOFRUCTOKINASE-RELATED"/>
    <property type="match status" value="1"/>
</dbReference>
<dbReference type="Pfam" id="PF00294">
    <property type="entry name" value="PfkB"/>
    <property type="match status" value="1"/>
</dbReference>
<dbReference type="PIRSF" id="PIRSF000535">
    <property type="entry name" value="1PFK/6PFK/LacC"/>
    <property type="match status" value="1"/>
</dbReference>
<dbReference type="SUPFAM" id="SSF53613">
    <property type="entry name" value="Ribokinase-like"/>
    <property type="match status" value="1"/>
</dbReference>
<dbReference type="PROSITE" id="PS00583">
    <property type="entry name" value="PFKB_KINASES_1"/>
    <property type="match status" value="1"/>
</dbReference>
<dbReference type="PROSITE" id="PS00584">
    <property type="entry name" value="PFKB_KINASES_2"/>
    <property type="match status" value="1"/>
</dbReference>
<organism>
    <name type="scientific">Staphylococcus epidermidis (strain ATCC 35984 / DSM 28319 / BCRC 17069 / CCUG 31568 / BM 3577 / RP62A)</name>
    <dbReference type="NCBI Taxonomy" id="176279"/>
    <lineage>
        <taxon>Bacteria</taxon>
        <taxon>Bacillati</taxon>
        <taxon>Bacillota</taxon>
        <taxon>Bacilli</taxon>
        <taxon>Bacillales</taxon>
        <taxon>Staphylococcaceae</taxon>
        <taxon>Staphylococcus</taxon>
    </lineage>
</organism>